<dbReference type="EC" id="6.1.1.11" evidence="1"/>
<dbReference type="EMBL" id="BX640433">
    <property type="protein sequence ID" value="CAE38743.1"/>
    <property type="molecule type" value="Genomic_DNA"/>
</dbReference>
<dbReference type="RefSeq" id="WP_003814026.1">
    <property type="nucleotide sequence ID" value="NC_002928.3"/>
</dbReference>
<dbReference type="SMR" id="Q7W545"/>
<dbReference type="GeneID" id="93205244"/>
<dbReference type="KEGG" id="bpa:BPP3459"/>
<dbReference type="HOGENOM" id="CLU_023797_1_1_4"/>
<dbReference type="UniPathway" id="UPA00906">
    <property type="reaction ID" value="UER00895"/>
</dbReference>
<dbReference type="Proteomes" id="UP000001421">
    <property type="component" value="Chromosome"/>
</dbReference>
<dbReference type="GO" id="GO:0005737">
    <property type="term" value="C:cytoplasm"/>
    <property type="evidence" value="ECO:0007669"/>
    <property type="project" value="UniProtKB-SubCell"/>
</dbReference>
<dbReference type="GO" id="GO:0005524">
    <property type="term" value="F:ATP binding"/>
    <property type="evidence" value="ECO:0007669"/>
    <property type="project" value="UniProtKB-UniRule"/>
</dbReference>
<dbReference type="GO" id="GO:0004828">
    <property type="term" value="F:serine-tRNA ligase activity"/>
    <property type="evidence" value="ECO:0007669"/>
    <property type="project" value="UniProtKB-UniRule"/>
</dbReference>
<dbReference type="GO" id="GO:0016260">
    <property type="term" value="P:selenocysteine biosynthetic process"/>
    <property type="evidence" value="ECO:0007669"/>
    <property type="project" value="UniProtKB-UniRule"/>
</dbReference>
<dbReference type="GO" id="GO:0006434">
    <property type="term" value="P:seryl-tRNA aminoacylation"/>
    <property type="evidence" value="ECO:0007669"/>
    <property type="project" value="UniProtKB-UniRule"/>
</dbReference>
<dbReference type="CDD" id="cd00770">
    <property type="entry name" value="SerRS_core"/>
    <property type="match status" value="1"/>
</dbReference>
<dbReference type="Gene3D" id="3.30.930.10">
    <property type="entry name" value="Bira Bifunctional Protein, Domain 2"/>
    <property type="match status" value="1"/>
</dbReference>
<dbReference type="Gene3D" id="1.10.287.40">
    <property type="entry name" value="Serine-tRNA synthetase, tRNA binding domain"/>
    <property type="match status" value="1"/>
</dbReference>
<dbReference type="HAMAP" id="MF_00176">
    <property type="entry name" value="Ser_tRNA_synth_type1"/>
    <property type="match status" value="1"/>
</dbReference>
<dbReference type="InterPro" id="IPR002314">
    <property type="entry name" value="aa-tRNA-synt_IIb"/>
</dbReference>
<dbReference type="InterPro" id="IPR006195">
    <property type="entry name" value="aa-tRNA-synth_II"/>
</dbReference>
<dbReference type="InterPro" id="IPR045864">
    <property type="entry name" value="aa-tRNA-synth_II/BPL/LPL"/>
</dbReference>
<dbReference type="InterPro" id="IPR002317">
    <property type="entry name" value="Ser-tRNA-ligase_type_1"/>
</dbReference>
<dbReference type="InterPro" id="IPR015866">
    <property type="entry name" value="Ser-tRNA-synth_1_N"/>
</dbReference>
<dbReference type="InterPro" id="IPR042103">
    <property type="entry name" value="SerRS_1_N_sf"/>
</dbReference>
<dbReference type="InterPro" id="IPR033729">
    <property type="entry name" value="SerRS_core"/>
</dbReference>
<dbReference type="InterPro" id="IPR010978">
    <property type="entry name" value="tRNA-bd_arm"/>
</dbReference>
<dbReference type="NCBIfam" id="TIGR00414">
    <property type="entry name" value="serS"/>
    <property type="match status" value="1"/>
</dbReference>
<dbReference type="PANTHER" id="PTHR43697:SF1">
    <property type="entry name" value="SERINE--TRNA LIGASE"/>
    <property type="match status" value="1"/>
</dbReference>
<dbReference type="PANTHER" id="PTHR43697">
    <property type="entry name" value="SERYL-TRNA SYNTHETASE"/>
    <property type="match status" value="1"/>
</dbReference>
<dbReference type="Pfam" id="PF02403">
    <property type="entry name" value="Seryl_tRNA_N"/>
    <property type="match status" value="1"/>
</dbReference>
<dbReference type="Pfam" id="PF00587">
    <property type="entry name" value="tRNA-synt_2b"/>
    <property type="match status" value="1"/>
</dbReference>
<dbReference type="PIRSF" id="PIRSF001529">
    <property type="entry name" value="Ser-tRNA-synth_IIa"/>
    <property type="match status" value="1"/>
</dbReference>
<dbReference type="PRINTS" id="PR00981">
    <property type="entry name" value="TRNASYNTHSER"/>
</dbReference>
<dbReference type="SUPFAM" id="SSF55681">
    <property type="entry name" value="Class II aaRS and biotin synthetases"/>
    <property type="match status" value="1"/>
</dbReference>
<dbReference type="SUPFAM" id="SSF46589">
    <property type="entry name" value="tRNA-binding arm"/>
    <property type="match status" value="1"/>
</dbReference>
<dbReference type="PROSITE" id="PS50862">
    <property type="entry name" value="AA_TRNA_LIGASE_II"/>
    <property type="match status" value="1"/>
</dbReference>
<sequence>MLDPILLRKDLQTVVDRLKSRGVDFDIARFNELESRRKAVQTETESQQARRNALAKQIGQLKGKGAPEAEVQAVMAESQALPARLKALEDELAQTQAQLNDLLMSVPNLPHASVPQGASSDENVEVRRWLPGAADERGNPAALGFEVRDHVAVGEPLGLDFDLAARLSGARFSFMRGQMARLHRALAQFMLDLQTGTHGYTECYTPYIVNSSTLFGTGQLPKFKDDMFFVTKGGGDDEPKVDEQGNPLAREDQYLISTSEITLTSVVRETIVAGADLPLRLTAHTPCFRSEAGSGGRDTRGMIRQHQFDKVEMVQIAHPEHSYEALEEMVGHAERVLQLLELPYRVMLLCTGDMGFGSAKTYDLEVWLPAQDTWREISSVSNCETFQARRMQARFRNAQNKPEYVHTLNGSGLAVGRALVAVLENCQQADGSVRVPAVLQPYMGGLTVLEP</sequence>
<keyword id="KW-0030">Aminoacyl-tRNA synthetase</keyword>
<keyword id="KW-0067">ATP-binding</keyword>
<keyword id="KW-0963">Cytoplasm</keyword>
<keyword id="KW-0436">Ligase</keyword>
<keyword id="KW-0547">Nucleotide-binding</keyword>
<keyword id="KW-0648">Protein biosynthesis</keyword>
<proteinExistence type="inferred from homology"/>
<organism>
    <name type="scientific">Bordetella parapertussis (strain 12822 / ATCC BAA-587 / NCTC 13253)</name>
    <dbReference type="NCBI Taxonomy" id="257311"/>
    <lineage>
        <taxon>Bacteria</taxon>
        <taxon>Pseudomonadati</taxon>
        <taxon>Pseudomonadota</taxon>
        <taxon>Betaproteobacteria</taxon>
        <taxon>Burkholderiales</taxon>
        <taxon>Alcaligenaceae</taxon>
        <taxon>Bordetella</taxon>
    </lineage>
</organism>
<name>SYS_BORPA</name>
<feature type="chain" id="PRO_0000122013" description="Serine--tRNA ligase">
    <location>
        <begin position="1"/>
        <end position="451"/>
    </location>
</feature>
<feature type="binding site" evidence="1">
    <location>
        <begin position="258"/>
        <end position="260"/>
    </location>
    <ligand>
        <name>L-serine</name>
        <dbReference type="ChEBI" id="CHEBI:33384"/>
    </ligand>
</feature>
<feature type="binding site" evidence="1">
    <location>
        <begin position="289"/>
        <end position="291"/>
    </location>
    <ligand>
        <name>ATP</name>
        <dbReference type="ChEBI" id="CHEBI:30616"/>
    </ligand>
</feature>
<feature type="binding site" evidence="1">
    <location>
        <position position="312"/>
    </location>
    <ligand>
        <name>L-serine</name>
        <dbReference type="ChEBI" id="CHEBI:33384"/>
    </ligand>
</feature>
<feature type="binding site" evidence="1">
    <location>
        <begin position="376"/>
        <end position="379"/>
    </location>
    <ligand>
        <name>ATP</name>
        <dbReference type="ChEBI" id="CHEBI:30616"/>
    </ligand>
</feature>
<feature type="binding site" evidence="1">
    <location>
        <position position="411"/>
    </location>
    <ligand>
        <name>L-serine</name>
        <dbReference type="ChEBI" id="CHEBI:33384"/>
    </ligand>
</feature>
<comment type="function">
    <text evidence="1">Catalyzes the attachment of serine to tRNA(Ser). Is also able to aminoacylate tRNA(Sec) with serine, to form the misacylated tRNA L-seryl-tRNA(Sec), which will be further converted into selenocysteinyl-tRNA(Sec).</text>
</comment>
<comment type="catalytic activity">
    <reaction evidence="1">
        <text>tRNA(Ser) + L-serine + ATP = L-seryl-tRNA(Ser) + AMP + diphosphate + H(+)</text>
        <dbReference type="Rhea" id="RHEA:12292"/>
        <dbReference type="Rhea" id="RHEA-COMP:9669"/>
        <dbReference type="Rhea" id="RHEA-COMP:9703"/>
        <dbReference type="ChEBI" id="CHEBI:15378"/>
        <dbReference type="ChEBI" id="CHEBI:30616"/>
        <dbReference type="ChEBI" id="CHEBI:33019"/>
        <dbReference type="ChEBI" id="CHEBI:33384"/>
        <dbReference type="ChEBI" id="CHEBI:78442"/>
        <dbReference type="ChEBI" id="CHEBI:78533"/>
        <dbReference type="ChEBI" id="CHEBI:456215"/>
        <dbReference type="EC" id="6.1.1.11"/>
    </reaction>
</comment>
<comment type="catalytic activity">
    <reaction evidence="1">
        <text>tRNA(Sec) + L-serine + ATP = L-seryl-tRNA(Sec) + AMP + diphosphate + H(+)</text>
        <dbReference type="Rhea" id="RHEA:42580"/>
        <dbReference type="Rhea" id="RHEA-COMP:9742"/>
        <dbReference type="Rhea" id="RHEA-COMP:10128"/>
        <dbReference type="ChEBI" id="CHEBI:15378"/>
        <dbReference type="ChEBI" id="CHEBI:30616"/>
        <dbReference type="ChEBI" id="CHEBI:33019"/>
        <dbReference type="ChEBI" id="CHEBI:33384"/>
        <dbReference type="ChEBI" id="CHEBI:78442"/>
        <dbReference type="ChEBI" id="CHEBI:78533"/>
        <dbReference type="ChEBI" id="CHEBI:456215"/>
        <dbReference type="EC" id="6.1.1.11"/>
    </reaction>
</comment>
<comment type="pathway">
    <text evidence="1">Aminoacyl-tRNA biosynthesis; selenocysteinyl-tRNA(Sec) biosynthesis; L-seryl-tRNA(Sec) from L-serine and tRNA(Sec): step 1/1.</text>
</comment>
<comment type="subunit">
    <text evidence="1">Homodimer. The tRNA molecule binds across the dimer.</text>
</comment>
<comment type="subcellular location">
    <subcellularLocation>
        <location evidence="1">Cytoplasm</location>
    </subcellularLocation>
</comment>
<comment type="domain">
    <text evidence="1">Consists of two distinct domains, a catalytic core and a N-terminal extension that is involved in tRNA binding.</text>
</comment>
<comment type="similarity">
    <text evidence="1">Belongs to the class-II aminoacyl-tRNA synthetase family. Type-1 seryl-tRNA synthetase subfamily.</text>
</comment>
<accession>Q7W545</accession>
<evidence type="ECO:0000255" key="1">
    <source>
        <dbReference type="HAMAP-Rule" id="MF_00176"/>
    </source>
</evidence>
<gene>
    <name evidence="1" type="primary">serS</name>
    <name type="ordered locus">BPP3459</name>
</gene>
<reference key="1">
    <citation type="journal article" date="2003" name="Nat. Genet.">
        <title>Comparative analysis of the genome sequences of Bordetella pertussis, Bordetella parapertussis and Bordetella bronchiseptica.</title>
        <authorList>
            <person name="Parkhill J."/>
            <person name="Sebaihia M."/>
            <person name="Preston A."/>
            <person name="Murphy L.D."/>
            <person name="Thomson N.R."/>
            <person name="Harris D.E."/>
            <person name="Holden M.T.G."/>
            <person name="Churcher C.M."/>
            <person name="Bentley S.D."/>
            <person name="Mungall K.L."/>
            <person name="Cerdeno-Tarraga A.-M."/>
            <person name="Temple L."/>
            <person name="James K.D."/>
            <person name="Harris B."/>
            <person name="Quail M.A."/>
            <person name="Achtman M."/>
            <person name="Atkin R."/>
            <person name="Baker S."/>
            <person name="Basham D."/>
            <person name="Bason N."/>
            <person name="Cherevach I."/>
            <person name="Chillingworth T."/>
            <person name="Collins M."/>
            <person name="Cronin A."/>
            <person name="Davis P."/>
            <person name="Doggett J."/>
            <person name="Feltwell T."/>
            <person name="Goble A."/>
            <person name="Hamlin N."/>
            <person name="Hauser H."/>
            <person name="Holroyd S."/>
            <person name="Jagels K."/>
            <person name="Leather S."/>
            <person name="Moule S."/>
            <person name="Norberczak H."/>
            <person name="O'Neil S."/>
            <person name="Ormond D."/>
            <person name="Price C."/>
            <person name="Rabbinowitsch E."/>
            <person name="Rutter S."/>
            <person name="Sanders M."/>
            <person name="Saunders D."/>
            <person name="Seeger K."/>
            <person name="Sharp S."/>
            <person name="Simmonds M."/>
            <person name="Skelton J."/>
            <person name="Squares R."/>
            <person name="Squares S."/>
            <person name="Stevens K."/>
            <person name="Unwin L."/>
            <person name="Whitehead S."/>
            <person name="Barrell B.G."/>
            <person name="Maskell D.J."/>
        </authorList>
    </citation>
    <scope>NUCLEOTIDE SEQUENCE [LARGE SCALE GENOMIC DNA]</scope>
    <source>
        <strain>12822 / ATCC BAA-587 / NCTC 13253</strain>
    </source>
</reference>
<protein>
    <recommendedName>
        <fullName evidence="1">Serine--tRNA ligase</fullName>
        <ecNumber evidence="1">6.1.1.11</ecNumber>
    </recommendedName>
    <alternativeName>
        <fullName evidence="1">Seryl-tRNA synthetase</fullName>
        <shortName evidence="1">SerRS</shortName>
    </alternativeName>
    <alternativeName>
        <fullName evidence="1">Seryl-tRNA(Ser/Sec) synthetase</fullName>
    </alternativeName>
</protein>